<evidence type="ECO:0000250" key="1"/>
<evidence type="ECO:0000255" key="2">
    <source>
        <dbReference type="PROSITE-ProRule" id="PRU00433"/>
    </source>
</evidence>
<evidence type="ECO:0000305" key="3"/>
<protein>
    <recommendedName>
        <fullName>Cytochrome c, testis-specific</fullName>
    </recommendedName>
</protein>
<sequence>MGDVEKGKKVFVQKCSQCHTVEKGGKHKTGPNLHGLFGRKTGQAEGFSYTDANKNKGIVWDEDTLMVYLENPKKYIPGTKMIFAGIKKKGERQDLIAYLKQSTSS</sequence>
<feature type="initiator methionine" description="Removed" evidence="1">
    <location>
        <position position="1"/>
    </location>
</feature>
<feature type="chain" id="PRO_0000266017" description="Cytochrome c, testis-specific">
    <location>
        <begin position="2"/>
        <end position="105"/>
    </location>
</feature>
<feature type="binding site" description="covalent" evidence="2">
    <location>
        <position position="15"/>
    </location>
    <ligand>
        <name>heme c</name>
        <dbReference type="ChEBI" id="CHEBI:61717"/>
    </ligand>
</feature>
<feature type="binding site" description="covalent" evidence="2">
    <location>
        <position position="18"/>
    </location>
    <ligand>
        <name>heme c</name>
        <dbReference type="ChEBI" id="CHEBI:61717"/>
    </ligand>
</feature>
<feature type="binding site" description="axial binding residue" evidence="2">
    <location>
        <position position="19"/>
    </location>
    <ligand>
        <name>heme c</name>
        <dbReference type="ChEBI" id="CHEBI:61717"/>
    </ligand>
    <ligandPart>
        <name>Fe</name>
        <dbReference type="ChEBI" id="CHEBI:18248"/>
    </ligandPart>
</feature>
<feature type="binding site" description="axial binding residue" evidence="2">
    <location>
        <position position="81"/>
    </location>
    <ligand>
        <name>heme c</name>
        <dbReference type="ChEBI" id="CHEBI:61717"/>
    </ligand>
    <ligandPart>
        <name>Fe</name>
        <dbReference type="ChEBI" id="CHEBI:18248"/>
    </ligandPart>
</feature>
<feature type="modified residue" description="N-acetylglycine" evidence="1">
    <location>
        <position position="2"/>
    </location>
</feature>
<name>CYC2_XENLA</name>
<gene>
    <name type="primary">cyct</name>
</gene>
<reference key="1">
    <citation type="submission" date="2004-06" db="EMBL/GenBank/DDBJ databases">
        <authorList>
            <consortium name="NIH - Xenopus Gene Collection (XGC) project"/>
        </authorList>
    </citation>
    <scope>NUCLEOTIDE SEQUENCE [LARGE SCALE MRNA]</scope>
    <source>
        <tissue>Kidney</tissue>
    </source>
</reference>
<accession>Q6DKE1</accession>
<comment type="function">
    <text evidence="1">Electron carrier protein. The oxidized form of the cytochrome c heme group can accept an electron from the heme group of the cytochrome c1 subunit of cytochrome reductase. Cytochrome c then transfers this electron to the cytochrome oxidase complex, the final protein carrier in the mitochondrial electron-transport chain (By similarity).</text>
</comment>
<comment type="subcellular location">
    <subcellularLocation>
        <location evidence="1">Mitochondrion intermembrane space</location>
    </subcellularLocation>
    <text evidence="1">Loosely associated with the inner membrane.</text>
</comment>
<comment type="PTM">
    <text evidence="1">Binds 1 heme c group covalently per subunit.</text>
</comment>
<comment type="similarity">
    <text evidence="3">Belongs to the cytochrome c family.</text>
</comment>
<comment type="online information" name="Protein Spotlight">
    <link uri="https://www.proteinspotlight.org/back_issues/076"/>
    <text>Life shuttle - Issue 76 of November 2006</text>
</comment>
<dbReference type="EMBL" id="BC074190">
    <property type="protein sequence ID" value="AAH74190.1"/>
    <property type="molecule type" value="mRNA"/>
</dbReference>
<dbReference type="RefSeq" id="NP_001086101.1">
    <property type="nucleotide sequence ID" value="NM_001092632.1"/>
</dbReference>
<dbReference type="RefSeq" id="XP_018124196.1">
    <property type="nucleotide sequence ID" value="XM_018268707.1"/>
</dbReference>
<dbReference type="SMR" id="Q6DKE1"/>
<dbReference type="GeneID" id="444530"/>
<dbReference type="KEGG" id="xla:444530"/>
<dbReference type="AGR" id="Xenbase:XB-GENE-971594"/>
<dbReference type="CTD" id="444530"/>
<dbReference type="Xenbase" id="XB-GENE-971594">
    <property type="gene designation" value="cycs.S"/>
</dbReference>
<dbReference type="OMA" id="MPAPYKK"/>
<dbReference type="OrthoDB" id="449280at2759"/>
<dbReference type="Proteomes" id="UP000186698">
    <property type="component" value="Chromosome 6S"/>
</dbReference>
<dbReference type="Bgee" id="444530">
    <property type="expression patterns" value="Expressed in gastrula and 19 other cell types or tissues"/>
</dbReference>
<dbReference type="GO" id="GO:0005758">
    <property type="term" value="C:mitochondrial intermembrane space"/>
    <property type="evidence" value="ECO:0000318"/>
    <property type="project" value="GO_Central"/>
</dbReference>
<dbReference type="GO" id="GO:0009055">
    <property type="term" value="F:electron transfer activity"/>
    <property type="evidence" value="ECO:0000318"/>
    <property type="project" value="GO_Central"/>
</dbReference>
<dbReference type="GO" id="GO:0020037">
    <property type="term" value="F:heme binding"/>
    <property type="evidence" value="ECO:0007669"/>
    <property type="project" value="InterPro"/>
</dbReference>
<dbReference type="GO" id="GO:0046872">
    <property type="term" value="F:metal ion binding"/>
    <property type="evidence" value="ECO:0007669"/>
    <property type="project" value="UniProtKB-KW"/>
</dbReference>
<dbReference type="GO" id="GO:0006123">
    <property type="term" value="P:mitochondrial electron transport, cytochrome c to oxygen"/>
    <property type="evidence" value="ECO:0000318"/>
    <property type="project" value="GO_Central"/>
</dbReference>
<dbReference type="GO" id="GO:0006122">
    <property type="term" value="P:mitochondrial electron transport, ubiquinol to cytochrome c"/>
    <property type="evidence" value="ECO:0000318"/>
    <property type="project" value="GO_Central"/>
</dbReference>
<dbReference type="FunFam" id="1.10.760.10:FF:000008">
    <property type="entry name" value="Cytochrome c"/>
    <property type="match status" value="1"/>
</dbReference>
<dbReference type="Gene3D" id="1.10.760.10">
    <property type="entry name" value="Cytochrome c-like domain"/>
    <property type="match status" value="1"/>
</dbReference>
<dbReference type="InterPro" id="IPR009056">
    <property type="entry name" value="Cyt_c-like_dom"/>
</dbReference>
<dbReference type="InterPro" id="IPR036909">
    <property type="entry name" value="Cyt_c-like_dom_sf"/>
</dbReference>
<dbReference type="InterPro" id="IPR002327">
    <property type="entry name" value="Cyt_c_1A/1B"/>
</dbReference>
<dbReference type="PANTHER" id="PTHR11961">
    <property type="entry name" value="CYTOCHROME C"/>
    <property type="match status" value="1"/>
</dbReference>
<dbReference type="Pfam" id="PF00034">
    <property type="entry name" value="Cytochrom_C"/>
    <property type="match status" value="1"/>
</dbReference>
<dbReference type="PRINTS" id="PR00604">
    <property type="entry name" value="CYTCHRMECIAB"/>
</dbReference>
<dbReference type="SUPFAM" id="SSF46626">
    <property type="entry name" value="Cytochrome c"/>
    <property type="match status" value="1"/>
</dbReference>
<dbReference type="PROSITE" id="PS51007">
    <property type="entry name" value="CYTC"/>
    <property type="match status" value="1"/>
</dbReference>
<proteinExistence type="inferred from homology"/>
<organism>
    <name type="scientific">Xenopus laevis</name>
    <name type="common">African clawed frog</name>
    <dbReference type="NCBI Taxonomy" id="8355"/>
    <lineage>
        <taxon>Eukaryota</taxon>
        <taxon>Metazoa</taxon>
        <taxon>Chordata</taxon>
        <taxon>Craniata</taxon>
        <taxon>Vertebrata</taxon>
        <taxon>Euteleostomi</taxon>
        <taxon>Amphibia</taxon>
        <taxon>Batrachia</taxon>
        <taxon>Anura</taxon>
        <taxon>Pipoidea</taxon>
        <taxon>Pipidae</taxon>
        <taxon>Xenopodinae</taxon>
        <taxon>Xenopus</taxon>
        <taxon>Xenopus</taxon>
    </lineage>
</organism>
<keyword id="KW-0007">Acetylation</keyword>
<keyword id="KW-0249">Electron transport</keyword>
<keyword id="KW-0349">Heme</keyword>
<keyword id="KW-0408">Iron</keyword>
<keyword id="KW-0479">Metal-binding</keyword>
<keyword id="KW-0496">Mitochondrion</keyword>
<keyword id="KW-1185">Reference proteome</keyword>
<keyword id="KW-0679">Respiratory chain</keyword>
<keyword id="KW-0813">Transport</keyword>